<sequence length="284" mass="31132">MKTTMLMLVLLVCSYIHYVCAQIRFVTPATTDSMDFTAISFSWEESNTGIPLEDITNTVFYICSGSMDAPQPCAVLYTSPSPSSISQAGPFAISQVFGPAGRLYFLWAQSTYAGGIVNDYTDFFTVNGLTGTFDNYEIYASLMALGVYPYVPTLTGFSTFLGVWPTGTMRDWYLSQTTGVLRTGPIQNRPDSTFTAATTDIQPLWETSSYSVFTTFAGPPIATSTVFASPTYMYTLYANYASTASKPTIIATPTAGLRRRDSWAQAAPKRGMRLGEHKRGLLYS</sequence>
<dbReference type="EMBL" id="CU329671">
    <property type="protein sequence ID" value="CAA20687.1"/>
    <property type="molecule type" value="Genomic_DNA"/>
</dbReference>
<dbReference type="PIR" id="T39320">
    <property type="entry name" value="S67380"/>
</dbReference>
<dbReference type="FunCoup" id="Q10196">
    <property type="interactions" value="5"/>
</dbReference>
<dbReference type="STRING" id="284812.Q10196"/>
<dbReference type="PaxDb" id="4896-SPBC11C11.05.1"/>
<dbReference type="EnsemblFungi" id="SPBC11C11.05.1">
    <property type="protein sequence ID" value="SPBC11C11.05.1:pep"/>
    <property type="gene ID" value="SPBC11C11.05"/>
</dbReference>
<dbReference type="KEGG" id="spo:2539867"/>
<dbReference type="PomBase" id="SPBC11C11.05"/>
<dbReference type="VEuPathDB" id="FungiDB:SPBC11C11.05"/>
<dbReference type="HOGENOM" id="CLU_987499_0_0_1"/>
<dbReference type="InParanoid" id="Q10196"/>
<dbReference type="OMA" id="TMRDWYL"/>
<dbReference type="PhylomeDB" id="Q10196"/>
<dbReference type="PRO" id="PR:Q10196"/>
<dbReference type="Proteomes" id="UP000002485">
    <property type="component" value="Chromosome II"/>
</dbReference>
<dbReference type="GO" id="GO:0005576">
    <property type="term" value="C:extracellular region"/>
    <property type="evidence" value="ECO:0000318"/>
    <property type="project" value="GO_Central"/>
</dbReference>
<dbReference type="GO" id="GO:0009277">
    <property type="term" value="C:fungal-type cell wall"/>
    <property type="evidence" value="ECO:0000266"/>
    <property type="project" value="PomBase"/>
</dbReference>
<dbReference type="GO" id="GO:0016020">
    <property type="term" value="C:membrane"/>
    <property type="evidence" value="ECO:0007669"/>
    <property type="project" value="UniProtKB-SubCell"/>
</dbReference>
<dbReference type="GO" id="GO:0006078">
    <property type="term" value="P:(1-&gt;6)-beta-D-glucan biosynthetic process"/>
    <property type="evidence" value="ECO:0000318"/>
    <property type="project" value="GO_Central"/>
</dbReference>
<dbReference type="GO" id="GO:0009272">
    <property type="term" value="P:fungal-type cell wall biogenesis"/>
    <property type="evidence" value="ECO:0000305"/>
    <property type="project" value="PomBase"/>
</dbReference>
<dbReference type="GO" id="GO:0031505">
    <property type="term" value="P:fungal-type cell wall organization"/>
    <property type="evidence" value="ECO:0000318"/>
    <property type="project" value="GO_Central"/>
</dbReference>
<dbReference type="InterPro" id="IPR045328">
    <property type="entry name" value="Kre9/Knh1"/>
</dbReference>
<dbReference type="InterPro" id="IPR018466">
    <property type="entry name" value="Kre9/Knh1-like_N"/>
</dbReference>
<dbReference type="InterPro" id="IPR008659">
    <property type="entry name" value="Kre9/Knh1_C"/>
</dbReference>
<dbReference type="PANTHER" id="PTHR28154">
    <property type="entry name" value="CELL WALL SYNTHESIS PROTEIN KNH1-RELATED"/>
    <property type="match status" value="1"/>
</dbReference>
<dbReference type="PANTHER" id="PTHR28154:SF1">
    <property type="entry name" value="CELL WALL SYNTHESIS PROTEIN KNH1-RELATED"/>
    <property type="match status" value="1"/>
</dbReference>
<dbReference type="Pfam" id="PF10342">
    <property type="entry name" value="Kre9_KNH"/>
    <property type="match status" value="1"/>
</dbReference>
<dbReference type="Pfam" id="PF05390">
    <property type="entry name" value="Kre9_KNH1_C"/>
    <property type="match status" value="1"/>
</dbReference>
<name>YBY5_SCHPO</name>
<accession>Q10196</accession>
<gene>
    <name type="ORF">SPBC11C11.05</name>
</gene>
<keyword id="KW-0472">Membrane</keyword>
<keyword id="KW-1185">Reference proteome</keyword>
<keyword id="KW-0732">Signal</keyword>
<keyword id="KW-0812">Transmembrane</keyword>
<keyword id="KW-1133">Transmembrane helix</keyword>
<feature type="signal peptide" evidence="1">
    <location>
        <begin position="1"/>
        <end position="21"/>
    </location>
</feature>
<feature type="chain" id="PRO_0000014193" description="Uncharacterized protein C11C11.05">
    <location>
        <begin position="22"/>
        <end position="284"/>
    </location>
</feature>
<feature type="transmembrane region" description="Helical" evidence="1">
    <location>
        <begin position="88"/>
        <end position="108"/>
    </location>
</feature>
<feature type="transmembrane region" description="Helical" evidence="1">
    <location>
        <begin position="144"/>
        <end position="164"/>
    </location>
</feature>
<feature type="transmembrane region" description="Helical" evidence="1">
    <location>
        <begin position="212"/>
        <end position="232"/>
    </location>
</feature>
<evidence type="ECO:0000255" key="1"/>
<evidence type="ECO:0000305" key="2"/>
<organism>
    <name type="scientific">Schizosaccharomyces pombe (strain 972 / ATCC 24843)</name>
    <name type="common">Fission yeast</name>
    <dbReference type="NCBI Taxonomy" id="284812"/>
    <lineage>
        <taxon>Eukaryota</taxon>
        <taxon>Fungi</taxon>
        <taxon>Dikarya</taxon>
        <taxon>Ascomycota</taxon>
        <taxon>Taphrinomycotina</taxon>
        <taxon>Schizosaccharomycetes</taxon>
        <taxon>Schizosaccharomycetales</taxon>
        <taxon>Schizosaccharomycetaceae</taxon>
        <taxon>Schizosaccharomyces</taxon>
    </lineage>
</organism>
<reference key="1">
    <citation type="journal article" date="2002" name="Nature">
        <title>The genome sequence of Schizosaccharomyces pombe.</title>
        <authorList>
            <person name="Wood V."/>
            <person name="Gwilliam R."/>
            <person name="Rajandream M.A."/>
            <person name="Lyne M.H."/>
            <person name="Lyne R."/>
            <person name="Stewart A."/>
            <person name="Sgouros J.G."/>
            <person name="Peat N."/>
            <person name="Hayles J."/>
            <person name="Baker S.G."/>
            <person name="Basham D."/>
            <person name="Bowman S."/>
            <person name="Brooks K."/>
            <person name="Brown D."/>
            <person name="Brown S."/>
            <person name="Chillingworth T."/>
            <person name="Churcher C.M."/>
            <person name="Collins M."/>
            <person name="Connor R."/>
            <person name="Cronin A."/>
            <person name="Davis P."/>
            <person name="Feltwell T."/>
            <person name="Fraser A."/>
            <person name="Gentles S."/>
            <person name="Goble A."/>
            <person name="Hamlin N."/>
            <person name="Harris D.E."/>
            <person name="Hidalgo J."/>
            <person name="Hodgson G."/>
            <person name="Holroyd S."/>
            <person name="Hornsby T."/>
            <person name="Howarth S."/>
            <person name="Huckle E.J."/>
            <person name="Hunt S."/>
            <person name="Jagels K."/>
            <person name="James K.D."/>
            <person name="Jones L."/>
            <person name="Jones M."/>
            <person name="Leather S."/>
            <person name="McDonald S."/>
            <person name="McLean J."/>
            <person name="Mooney P."/>
            <person name="Moule S."/>
            <person name="Mungall K.L."/>
            <person name="Murphy L.D."/>
            <person name="Niblett D."/>
            <person name="Odell C."/>
            <person name="Oliver K."/>
            <person name="O'Neil S."/>
            <person name="Pearson D."/>
            <person name="Quail M.A."/>
            <person name="Rabbinowitsch E."/>
            <person name="Rutherford K.M."/>
            <person name="Rutter S."/>
            <person name="Saunders D."/>
            <person name="Seeger K."/>
            <person name="Sharp S."/>
            <person name="Skelton J."/>
            <person name="Simmonds M.N."/>
            <person name="Squares R."/>
            <person name="Squares S."/>
            <person name="Stevens K."/>
            <person name="Taylor K."/>
            <person name="Taylor R.G."/>
            <person name="Tivey A."/>
            <person name="Walsh S.V."/>
            <person name="Warren T."/>
            <person name="Whitehead S."/>
            <person name="Woodward J.R."/>
            <person name="Volckaert G."/>
            <person name="Aert R."/>
            <person name="Robben J."/>
            <person name="Grymonprez B."/>
            <person name="Weltjens I."/>
            <person name="Vanstreels E."/>
            <person name="Rieger M."/>
            <person name="Schaefer M."/>
            <person name="Mueller-Auer S."/>
            <person name="Gabel C."/>
            <person name="Fuchs M."/>
            <person name="Duesterhoeft A."/>
            <person name="Fritzc C."/>
            <person name="Holzer E."/>
            <person name="Moestl D."/>
            <person name="Hilbert H."/>
            <person name="Borzym K."/>
            <person name="Langer I."/>
            <person name="Beck A."/>
            <person name="Lehrach H."/>
            <person name="Reinhardt R."/>
            <person name="Pohl T.M."/>
            <person name="Eger P."/>
            <person name="Zimmermann W."/>
            <person name="Wedler H."/>
            <person name="Wambutt R."/>
            <person name="Purnelle B."/>
            <person name="Goffeau A."/>
            <person name="Cadieu E."/>
            <person name="Dreano S."/>
            <person name="Gloux S."/>
            <person name="Lelaure V."/>
            <person name="Mottier S."/>
            <person name="Galibert F."/>
            <person name="Aves S.J."/>
            <person name="Xiang Z."/>
            <person name="Hunt C."/>
            <person name="Moore K."/>
            <person name="Hurst S.M."/>
            <person name="Lucas M."/>
            <person name="Rochet M."/>
            <person name="Gaillardin C."/>
            <person name="Tallada V.A."/>
            <person name="Garzon A."/>
            <person name="Thode G."/>
            <person name="Daga R.R."/>
            <person name="Cruzado L."/>
            <person name="Jimenez J."/>
            <person name="Sanchez M."/>
            <person name="del Rey F."/>
            <person name="Benito J."/>
            <person name="Dominguez A."/>
            <person name="Revuelta J.L."/>
            <person name="Moreno S."/>
            <person name="Armstrong J."/>
            <person name="Forsburg S.L."/>
            <person name="Cerutti L."/>
            <person name="Lowe T."/>
            <person name="McCombie W.R."/>
            <person name="Paulsen I."/>
            <person name="Potashkin J."/>
            <person name="Shpakovski G.V."/>
            <person name="Ussery D."/>
            <person name="Barrell B.G."/>
            <person name="Nurse P."/>
        </authorList>
    </citation>
    <scope>NUCLEOTIDE SEQUENCE [LARGE SCALE GENOMIC DNA]</scope>
    <source>
        <strain>972 / ATCC 24843</strain>
    </source>
</reference>
<protein>
    <recommendedName>
        <fullName>Uncharacterized protein C11C11.05</fullName>
    </recommendedName>
</protein>
<comment type="subcellular location">
    <subcellularLocation>
        <location evidence="2">Membrane</location>
        <topology evidence="2">Multi-pass membrane protein</topology>
    </subcellularLocation>
</comment>
<proteinExistence type="inferred from homology"/>